<reference key="1">
    <citation type="journal article" date="1993" name="Mol. Biochem. Parasitol.">
        <title>Crithidia fasciculata contains a transcribed leishmanial surface proteinase (gp63) gene homologue.</title>
        <authorList>
            <person name="Inverso J.A."/>
            <person name="Medina-Acosta E."/>
            <person name="O'Connor J."/>
            <person name="Russell D.G."/>
            <person name="Cross G.A.M."/>
        </authorList>
    </citation>
    <scope>NUCLEOTIDE SEQUENCE [GENOMIC DNA]</scope>
    <source>
        <strain>ATCC 11745</strain>
    </source>
</reference>
<reference key="2">
    <citation type="submission" date="2008-10" db="EMBL/GenBank/DDBJ databases">
        <authorList>
            <person name="Inverso J.A."/>
            <person name="Medina-Acosta E."/>
            <person name="O'Connor J."/>
            <person name="Russell D.G."/>
            <person name="Cross G.A.M."/>
        </authorList>
    </citation>
    <scope>SEQUENCE REVISION TO LEU-122</scope>
</reference>
<sequence length="653" mass="69171">MHAPPTATRRSGPRRTHGIMARLVRLAAGVLVVTLVIGALTALSADDAKTHPHKVCIHDELQQSLLDSVAQQGLAPQRVSRVGLPYVASATAAPAAQVGGVDFALAGDSAPDVTRSAEWGELRITVSAEELTDPAYHCATVGQVISNHIDDYVTCTADDIMTAEKLDILMNYLIPEALQMHKDRLQVQQVQGTWKVARMTSYCGRFKVPEEHFTTGLSNTDFVLYVASVPTSPGVLAWANTCQVFSNDQPAVGVINIPAATITERYDHLMVHAVTHEIAHSLGFSNAFFTNTGIGQFVTGVRGNPDTVPVINSPTVVAKAREHYGCDDVTYVELEDAGGSGTMGSHWKIRNAQDELMAGISGVAYYTSLTLSAFEDLGYYKANYSNAETMKWGKDVGCAFLTGKCVVDNVTQFPSMYCDKDENVYRCHTARLNLGSCEVTDYTFDLPDYLQYFTVPSVGGSADYYDYCPYIVRSPIGSCTQAASSASPFVSAFNTFSMASRCIDGTFTPKSTGGATVTAHLGMCTNVACNTADKTYSIQVYGNGAYIPCTPGATISLDTVSDAFEAGGNITCPPYLEVCQSNVKGAMDYESMTNSGSGSSRPAPVEPSGSGSGSSAATTAPSPTRDGSAAADRIAPRTAAVALLALAVAAACV</sequence>
<accession>Q06031</accession>
<evidence type="ECO:0000250" key="1"/>
<evidence type="ECO:0000250" key="2">
    <source>
        <dbReference type="UniProtKB" id="P08148"/>
    </source>
</evidence>
<evidence type="ECO:0000255" key="3"/>
<evidence type="ECO:0000255" key="4">
    <source>
        <dbReference type="PROSITE-ProRule" id="PRU00498"/>
    </source>
</evidence>
<evidence type="ECO:0000255" key="5">
    <source>
        <dbReference type="PROSITE-ProRule" id="PRU10095"/>
    </source>
</evidence>
<evidence type="ECO:0000256" key="6">
    <source>
        <dbReference type="SAM" id="MobiDB-lite"/>
    </source>
</evidence>
<evidence type="ECO:0000305" key="7"/>
<name>GP63_CRIFA</name>
<keyword id="KW-0130">Cell adhesion</keyword>
<keyword id="KW-1003">Cell membrane</keyword>
<keyword id="KW-1015">Disulfide bond</keyword>
<keyword id="KW-0325">Glycoprotein</keyword>
<keyword id="KW-0336">GPI-anchor</keyword>
<keyword id="KW-0378">Hydrolase</keyword>
<keyword id="KW-0449">Lipoprotein</keyword>
<keyword id="KW-0472">Membrane</keyword>
<keyword id="KW-0479">Metal-binding</keyword>
<keyword id="KW-0482">Metalloprotease</keyword>
<keyword id="KW-0645">Protease</keyword>
<keyword id="KW-0732">Signal</keyword>
<keyword id="KW-0862">Zinc</keyword>
<keyword id="KW-0865">Zymogen</keyword>
<dbReference type="EC" id="3.4.24.36"/>
<dbReference type="EMBL" id="M94364">
    <property type="protein sequence ID" value="AAA30319.1"/>
    <property type="molecule type" value="Genomic_DNA"/>
</dbReference>
<dbReference type="EMBL" id="M94365">
    <property type="protein sequence ID" value="AAA30320.2"/>
    <property type="molecule type" value="Genomic_DNA"/>
</dbReference>
<dbReference type="PIR" id="A60961">
    <property type="entry name" value="A60961"/>
</dbReference>
<dbReference type="SMR" id="Q06031"/>
<dbReference type="MEROPS" id="M08.001"/>
<dbReference type="GlyCosmos" id="Q06031">
    <property type="glycosylation" value="3 sites, No reported glycans"/>
</dbReference>
<dbReference type="VEuPathDB" id="TriTrypDB:CFAC1_040011900"/>
<dbReference type="GO" id="GO:0005737">
    <property type="term" value="C:cytoplasm"/>
    <property type="evidence" value="ECO:0007669"/>
    <property type="project" value="TreeGrafter"/>
</dbReference>
<dbReference type="GO" id="GO:0005886">
    <property type="term" value="C:plasma membrane"/>
    <property type="evidence" value="ECO:0007669"/>
    <property type="project" value="UniProtKB-SubCell"/>
</dbReference>
<dbReference type="GO" id="GO:0098552">
    <property type="term" value="C:side of membrane"/>
    <property type="evidence" value="ECO:0007669"/>
    <property type="project" value="UniProtKB-KW"/>
</dbReference>
<dbReference type="GO" id="GO:0046872">
    <property type="term" value="F:metal ion binding"/>
    <property type="evidence" value="ECO:0007669"/>
    <property type="project" value="UniProtKB-KW"/>
</dbReference>
<dbReference type="GO" id="GO:0004222">
    <property type="term" value="F:metalloendopeptidase activity"/>
    <property type="evidence" value="ECO:0007669"/>
    <property type="project" value="InterPro"/>
</dbReference>
<dbReference type="GO" id="GO:0007155">
    <property type="term" value="P:cell adhesion"/>
    <property type="evidence" value="ECO:0007669"/>
    <property type="project" value="UniProtKB-KW"/>
</dbReference>
<dbReference type="GO" id="GO:0006508">
    <property type="term" value="P:proteolysis"/>
    <property type="evidence" value="ECO:0007669"/>
    <property type="project" value="UniProtKB-KW"/>
</dbReference>
<dbReference type="FunFam" id="3.90.132.10:FF:000001">
    <property type="entry name" value="leishmanolysin-like peptidase isoform X2"/>
    <property type="match status" value="1"/>
</dbReference>
<dbReference type="Gene3D" id="3.10.170.20">
    <property type="match status" value="1"/>
</dbReference>
<dbReference type="Gene3D" id="3.90.132.10">
    <property type="entry name" value="Leishmanolysin , domain 2"/>
    <property type="match status" value="1"/>
</dbReference>
<dbReference type="Gene3D" id="2.10.55.10">
    <property type="entry name" value="Leishmanolysin domain 3"/>
    <property type="match status" value="1"/>
</dbReference>
<dbReference type="Gene3D" id="2.30.34.10">
    <property type="entry name" value="Leishmanolysin domain 4"/>
    <property type="match status" value="1"/>
</dbReference>
<dbReference type="InterPro" id="IPR001577">
    <property type="entry name" value="Peptidase_M8"/>
</dbReference>
<dbReference type="PANTHER" id="PTHR10942">
    <property type="entry name" value="LEISHMANOLYSIN-LIKE PEPTIDASE"/>
    <property type="match status" value="1"/>
</dbReference>
<dbReference type="PANTHER" id="PTHR10942:SF0">
    <property type="entry name" value="LEISHMANOLYSIN-LIKE PEPTIDASE"/>
    <property type="match status" value="1"/>
</dbReference>
<dbReference type="Pfam" id="PF01457">
    <property type="entry name" value="Peptidase_M8"/>
    <property type="match status" value="1"/>
</dbReference>
<dbReference type="PRINTS" id="PR00782">
    <property type="entry name" value="LSHMANOLYSIN"/>
</dbReference>
<dbReference type="SUPFAM" id="SSF55486">
    <property type="entry name" value="Metalloproteases ('zincins'), catalytic domain"/>
    <property type="match status" value="1"/>
</dbReference>
<dbReference type="PROSITE" id="PS00142">
    <property type="entry name" value="ZINC_PROTEASE"/>
    <property type="match status" value="1"/>
</dbReference>
<feature type="signal peptide" evidence="3">
    <location>
        <begin position="1"/>
        <end position="44"/>
    </location>
</feature>
<feature type="propeptide" id="PRO_0000028652" description="Activation peptide" evidence="2">
    <location>
        <begin position="45"/>
        <end position="113"/>
    </location>
</feature>
<feature type="chain" id="PRO_0000028653" description="Leishmanolysin homolog">
    <location>
        <begin position="114"/>
        <end position="628"/>
    </location>
</feature>
<feature type="propeptide" id="PRO_0000028654" description="Removed in mature form" evidence="3">
    <location>
        <begin position="629"/>
        <end position="653"/>
    </location>
</feature>
<feature type="region of interest" description="Disordered" evidence="6">
    <location>
        <begin position="590"/>
        <end position="631"/>
    </location>
</feature>
<feature type="compositionally biased region" description="Polar residues" evidence="6">
    <location>
        <begin position="591"/>
        <end position="600"/>
    </location>
</feature>
<feature type="compositionally biased region" description="Low complexity" evidence="6">
    <location>
        <begin position="607"/>
        <end position="631"/>
    </location>
</feature>
<feature type="active site" evidence="5">
    <location>
        <position position="277"/>
    </location>
</feature>
<feature type="binding site" evidence="5">
    <location>
        <position position="276"/>
    </location>
    <ligand>
        <name>Zn(2+)</name>
        <dbReference type="ChEBI" id="CHEBI:29105"/>
        <note>catalytic</note>
    </ligand>
</feature>
<feature type="binding site" evidence="5">
    <location>
        <position position="280"/>
    </location>
    <ligand>
        <name>Zn(2+)</name>
        <dbReference type="ChEBI" id="CHEBI:29105"/>
        <note>catalytic</note>
    </ligand>
</feature>
<feature type="binding site" evidence="5">
    <location>
        <position position="346"/>
    </location>
    <ligand>
        <name>Zn(2+)</name>
        <dbReference type="ChEBI" id="CHEBI:29105"/>
        <note>catalytic</note>
    </ligand>
</feature>
<feature type="lipid moiety-binding region" description="GPI-anchor amidated serine" evidence="3">
    <location>
        <position position="628"/>
    </location>
</feature>
<feature type="glycosylation site" description="N-linked (GlcNAc...) asparagine" evidence="4">
    <location>
        <position position="383"/>
    </location>
</feature>
<feature type="glycosylation site" description="N-linked (GlcNAc...) asparagine" evidence="4">
    <location>
        <position position="409"/>
    </location>
</feature>
<feature type="glycosylation site" description="N-linked (GlcNAc...) asparagine" evidence="4">
    <location>
        <position position="569"/>
    </location>
</feature>
<feature type="disulfide bond" evidence="2">
    <location>
        <begin position="138"/>
        <end position="155"/>
    </location>
</feature>
<feature type="disulfide bond" evidence="2">
    <location>
        <begin position="203"/>
        <end position="242"/>
    </location>
</feature>
<feature type="disulfide bond" evidence="2">
    <location>
        <begin position="326"/>
        <end position="398"/>
    </location>
</feature>
<feature type="disulfide bond" evidence="2">
    <location>
        <begin position="405"/>
        <end position="468"/>
    </location>
</feature>
<feature type="disulfide bond" evidence="2">
    <location>
        <begin position="418"/>
        <end position="437"/>
    </location>
</feature>
<feature type="disulfide bond" evidence="2">
    <location>
        <begin position="427"/>
        <end position="502"/>
    </location>
</feature>
<feature type="disulfide bond" evidence="2">
    <location>
        <begin position="479"/>
        <end position="524"/>
    </location>
</feature>
<feature type="disulfide bond" evidence="2">
    <location>
        <begin position="529"/>
        <end position="579"/>
    </location>
</feature>
<feature type="disulfide bond" evidence="2">
    <location>
        <begin position="549"/>
        <end position="572"/>
    </location>
</feature>
<gene>
    <name type="primary">gp63</name>
</gene>
<protein>
    <recommendedName>
        <fullName>Leishmanolysin homolog</fullName>
        <ecNumber>3.4.24.36</ecNumber>
    </recommendedName>
    <alternativeName>
        <fullName>Cell surface protease</fullName>
    </alternativeName>
    <alternativeName>
        <fullName>Major surface glycoprotein</fullName>
    </alternativeName>
    <alternativeName>
        <fullName>Protein gp63</fullName>
    </alternativeName>
</protein>
<organism>
    <name type="scientific">Crithidia fasciculata</name>
    <dbReference type="NCBI Taxonomy" id="5656"/>
    <lineage>
        <taxon>Eukaryota</taxon>
        <taxon>Discoba</taxon>
        <taxon>Euglenozoa</taxon>
        <taxon>Kinetoplastea</taxon>
        <taxon>Metakinetoplastina</taxon>
        <taxon>Trypanosomatida</taxon>
        <taxon>Trypanosomatidae</taxon>
        <taxon>Leishmaniinae</taxon>
        <taxon>Crithidia</taxon>
    </lineage>
</organism>
<comment type="function">
    <text evidence="1">Plays an integral role during the infection of macrophages in the mammalian host.</text>
</comment>
<comment type="catalytic activity">
    <reaction>
        <text>Preference for hydrophobic residues at P1 and P1' and basic residues at P2' and P3'. A model nonapeptide is cleaved at -Ala-Tyr-|-Leu-Lys-Lys-.</text>
        <dbReference type="EC" id="3.4.24.36"/>
    </reaction>
</comment>
<comment type="cofactor">
    <cofactor evidence="2">
        <name>Zn(2+)</name>
        <dbReference type="ChEBI" id="CHEBI:29105"/>
    </cofactor>
    <text evidence="2">Binds 1 zinc ion per subunit.</text>
</comment>
<comment type="subcellular location">
    <subcellularLocation>
        <location evidence="1">Cell membrane</location>
        <topology evidence="1">Lipid-anchor</topology>
        <topology evidence="1">GPI-anchor</topology>
    </subcellularLocation>
</comment>
<comment type="similarity">
    <text evidence="7">Belongs to the peptidase M8 family.</text>
</comment>
<proteinExistence type="inferred from homology"/>